<sequence length="347" mass="38299">MSVMFDPDTAIYPFPPKPTPLSIDEKAYYREKIKRLLKERNAVMVAHYYTDPEIQQLAEETGGCISDSLEMARFGAKHPASTLLVAGVRFMGETAKILSPEKTILMPTLQAECSLDLGCPVEEFNAFCDAHPDRTVVVYANTSAAVKARADWVVTSSIAVELIDHLDSLGEKIIWAPDKHLGRYVQKQTGGDILCWQGACIVHDEFKTQALTRLQEEYPDAAILVHPESPQAIVDMADAVGSTSQLIAAAKTLPHQRLIVATDRGIFYKMQQAVPDKELLEAPTAGEGATCRSCAHCPWMAMNDLQAIAEALEQEGSNHEVHVDERLRERALVPLNRMLDFAATLRG</sequence>
<comment type="function">
    <text evidence="1">Catalyzes the condensation of iminoaspartate with dihydroxyacetone phosphate to form quinolinate.</text>
</comment>
<comment type="catalytic activity">
    <reaction evidence="1">
        <text>iminosuccinate + dihydroxyacetone phosphate = quinolinate + phosphate + 2 H2O + H(+)</text>
        <dbReference type="Rhea" id="RHEA:25888"/>
        <dbReference type="ChEBI" id="CHEBI:15377"/>
        <dbReference type="ChEBI" id="CHEBI:15378"/>
        <dbReference type="ChEBI" id="CHEBI:29959"/>
        <dbReference type="ChEBI" id="CHEBI:43474"/>
        <dbReference type="ChEBI" id="CHEBI:57642"/>
        <dbReference type="ChEBI" id="CHEBI:77875"/>
        <dbReference type="EC" id="2.5.1.72"/>
    </reaction>
    <physiologicalReaction direction="left-to-right" evidence="1">
        <dbReference type="Rhea" id="RHEA:25889"/>
    </physiologicalReaction>
</comment>
<comment type="cofactor">
    <cofactor evidence="1">
        <name>[4Fe-4S] cluster</name>
        <dbReference type="ChEBI" id="CHEBI:49883"/>
    </cofactor>
    <text evidence="1">Binds 1 [4Fe-4S] cluster per subunit.</text>
</comment>
<comment type="pathway">
    <text evidence="1">Cofactor biosynthesis; NAD(+) biosynthesis; quinolinate from iminoaspartate: step 1/1.</text>
</comment>
<comment type="subcellular location">
    <subcellularLocation>
        <location evidence="1">Cytoplasm</location>
    </subcellularLocation>
</comment>
<comment type="similarity">
    <text evidence="1">Belongs to the quinolinate synthase family. Type 1 subfamily.</text>
</comment>
<organism>
    <name type="scientific">Shigella boydii serotype 4 (strain Sb227)</name>
    <dbReference type="NCBI Taxonomy" id="300268"/>
    <lineage>
        <taxon>Bacteria</taxon>
        <taxon>Pseudomonadati</taxon>
        <taxon>Pseudomonadota</taxon>
        <taxon>Gammaproteobacteria</taxon>
        <taxon>Enterobacterales</taxon>
        <taxon>Enterobacteriaceae</taxon>
        <taxon>Shigella</taxon>
    </lineage>
</organism>
<reference key="1">
    <citation type="journal article" date="2005" name="Nucleic Acids Res.">
        <title>Genome dynamics and diversity of Shigella species, the etiologic agents of bacillary dysentery.</title>
        <authorList>
            <person name="Yang F."/>
            <person name="Yang J."/>
            <person name="Zhang X."/>
            <person name="Chen L."/>
            <person name="Jiang Y."/>
            <person name="Yan Y."/>
            <person name="Tang X."/>
            <person name="Wang J."/>
            <person name="Xiong Z."/>
            <person name="Dong J."/>
            <person name="Xue Y."/>
            <person name="Zhu Y."/>
            <person name="Xu X."/>
            <person name="Sun L."/>
            <person name="Chen S."/>
            <person name="Nie H."/>
            <person name="Peng J."/>
            <person name="Xu J."/>
            <person name="Wang Y."/>
            <person name="Yuan Z."/>
            <person name="Wen Y."/>
            <person name="Yao Z."/>
            <person name="Shen Y."/>
            <person name="Qiang B."/>
            <person name="Hou Y."/>
            <person name="Yu J."/>
            <person name="Jin Q."/>
        </authorList>
    </citation>
    <scope>NUCLEOTIDE SEQUENCE [LARGE SCALE GENOMIC DNA]</scope>
    <source>
        <strain>Sb227</strain>
    </source>
</reference>
<name>NADA_SHIBS</name>
<dbReference type="EC" id="2.5.1.72" evidence="1"/>
<dbReference type="EMBL" id="CP000036">
    <property type="protein sequence ID" value="ABB65289.1"/>
    <property type="molecule type" value="Genomic_DNA"/>
</dbReference>
<dbReference type="RefSeq" id="WP_000115289.1">
    <property type="nucleotide sequence ID" value="NC_007613.1"/>
</dbReference>
<dbReference type="SMR" id="Q324G9"/>
<dbReference type="KEGG" id="sbo:SBO_0605"/>
<dbReference type="HOGENOM" id="CLU_047382_1_0_6"/>
<dbReference type="UniPathway" id="UPA00253">
    <property type="reaction ID" value="UER00327"/>
</dbReference>
<dbReference type="Proteomes" id="UP000007067">
    <property type="component" value="Chromosome"/>
</dbReference>
<dbReference type="GO" id="GO:0005829">
    <property type="term" value="C:cytosol"/>
    <property type="evidence" value="ECO:0007669"/>
    <property type="project" value="TreeGrafter"/>
</dbReference>
<dbReference type="GO" id="GO:0051539">
    <property type="term" value="F:4 iron, 4 sulfur cluster binding"/>
    <property type="evidence" value="ECO:0007669"/>
    <property type="project" value="UniProtKB-KW"/>
</dbReference>
<dbReference type="GO" id="GO:0046872">
    <property type="term" value="F:metal ion binding"/>
    <property type="evidence" value="ECO:0007669"/>
    <property type="project" value="UniProtKB-KW"/>
</dbReference>
<dbReference type="GO" id="GO:0008987">
    <property type="term" value="F:quinolinate synthetase A activity"/>
    <property type="evidence" value="ECO:0007669"/>
    <property type="project" value="UniProtKB-UniRule"/>
</dbReference>
<dbReference type="GO" id="GO:0034628">
    <property type="term" value="P:'de novo' NAD biosynthetic process from L-aspartate"/>
    <property type="evidence" value="ECO:0007669"/>
    <property type="project" value="TreeGrafter"/>
</dbReference>
<dbReference type="FunFam" id="3.40.50.10800:FF:000003">
    <property type="entry name" value="Quinolinate synthase A"/>
    <property type="match status" value="1"/>
</dbReference>
<dbReference type="Gene3D" id="3.40.50.10800">
    <property type="entry name" value="NadA-like"/>
    <property type="match status" value="3"/>
</dbReference>
<dbReference type="HAMAP" id="MF_00567">
    <property type="entry name" value="NadA_type1"/>
    <property type="match status" value="1"/>
</dbReference>
<dbReference type="InterPro" id="IPR003473">
    <property type="entry name" value="NadA"/>
</dbReference>
<dbReference type="InterPro" id="IPR036094">
    <property type="entry name" value="NadA_sf"/>
</dbReference>
<dbReference type="InterPro" id="IPR023513">
    <property type="entry name" value="Quinolinate_synth_A_type1"/>
</dbReference>
<dbReference type="NCBIfam" id="TIGR00550">
    <property type="entry name" value="nadA"/>
    <property type="match status" value="1"/>
</dbReference>
<dbReference type="NCBIfam" id="NF006877">
    <property type="entry name" value="PRK09375.1-1"/>
    <property type="match status" value="1"/>
</dbReference>
<dbReference type="NCBIfam" id="NF006878">
    <property type="entry name" value="PRK09375.1-2"/>
    <property type="match status" value="1"/>
</dbReference>
<dbReference type="PANTHER" id="PTHR30573:SF0">
    <property type="entry name" value="QUINOLINATE SYNTHASE, CHLOROPLASTIC"/>
    <property type="match status" value="1"/>
</dbReference>
<dbReference type="PANTHER" id="PTHR30573">
    <property type="entry name" value="QUINOLINATE SYNTHETASE A"/>
    <property type="match status" value="1"/>
</dbReference>
<dbReference type="Pfam" id="PF02445">
    <property type="entry name" value="NadA"/>
    <property type="match status" value="1"/>
</dbReference>
<dbReference type="SUPFAM" id="SSF142754">
    <property type="entry name" value="NadA-like"/>
    <property type="match status" value="1"/>
</dbReference>
<proteinExistence type="inferred from homology"/>
<feature type="chain" id="PRO_1000024973" description="Quinolinate synthase">
    <location>
        <begin position="1"/>
        <end position="347"/>
    </location>
</feature>
<feature type="binding site" evidence="1">
    <location>
        <position position="47"/>
    </location>
    <ligand>
        <name>iminosuccinate</name>
        <dbReference type="ChEBI" id="CHEBI:77875"/>
    </ligand>
</feature>
<feature type="binding site" evidence="1">
    <location>
        <position position="68"/>
    </location>
    <ligand>
        <name>iminosuccinate</name>
        <dbReference type="ChEBI" id="CHEBI:77875"/>
    </ligand>
</feature>
<feature type="binding site" evidence="1">
    <location>
        <position position="113"/>
    </location>
    <ligand>
        <name>[4Fe-4S] cluster</name>
        <dbReference type="ChEBI" id="CHEBI:49883"/>
    </ligand>
</feature>
<feature type="binding site" evidence="1">
    <location>
        <begin position="139"/>
        <end position="141"/>
    </location>
    <ligand>
        <name>iminosuccinate</name>
        <dbReference type="ChEBI" id="CHEBI:77875"/>
    </ligand>
</feature>
<feature type="binding site" evidence="1">
    <location>
        <position position="156"/>
    </location>
    <ligand>
        <name>iminosuccinate</name>
        <dbReference type="ChEBI" id="CHEBI:77875"/>
    </ligand>
</feature>
<feature type="binding site" evidence="1">
    <location>
        <position position="200"/>
    </location>
    <ligand>
        <name>[4Fe-4S] cluster</name>
        <dbReference type="ChEBI" id="CHEBI:49883"/>
    </ligand>
</feature>
<feature type="binding site" evidence="1">
    <location>
        <begin position="226"/>
        <end position="228"/>
    </location>
    <ligand>
        <name>iminosuccinate</name>
        <dbReference type="ChEBI" id="CHEBI:77875"/>
    </ligand>
</feature>
<feature type="binding site" evidence="1">
    <location>
        <position position="243"/>
    </location>
    <ligand>
        <name>iminosuccinate</name>
        <dbReference type="ChEBI" id="CHEBI:77875"/>
    </ligand>
</feature>
<feature type="binding site" evidence="1">
    <location>
        <position position="297"/>
    </location>
    <ligand>
        <name>[4Fe-4S] cluster</name>
        <dbReference type="ChEBI" id="CHEBI:49883"/>
    </ligand>
</feature>
<gene>
    <name evidence="1" type="primary">nadA</name>
    <name type="ordered locus">SBO_0605</name>
</gene>
<protein>
    <recommendedName>
        <fullName evidence="1">Quinolinate synthase</fullName>
        <ecNumber evidence="1">2.5.1.72</ecNumber>
    </recommendedName>
</protein>
<keyword id="KW-0004">4Fe-4S</keyword>
<keyword id="KW-0963">Cytoplasm</keyword>
<keyword id="KW-0408">Iron</keyword>
<keyword id="KW-0411">Iron-sulfur</keyword>
<keyword id="KW-0479">Metal-binding</keyword>
<keyword id="KW-0662">Pyridine nucleotide biosynthesis</keyword>
<keyword id="KW-0808">Transferase</keyword>
<evidence type="ECO:0000255" key="1">
    <source>
        <dbReference type="HAMAP-Rule" id="MF_00567"/>
    </source>
</evidence>
<accession>Q324G9</accession>